<gene>
    <name type="primary">TIC55</name>
</gene>
<evidence type="ECO:0000255" key="1"/>
<evidence type="ECO:0000255" key="2">
    <source>
        <dbReference type="PROSITE-ProRule" id="PRU00628"/>
    </source>
</evidence>
<evidence type="ECO:0000269" key="3">
    <source>
    </source>
</evidence>
<evidence type="ECO:0000269" key="4">
    <source>
    </source>
</evidence>
<accession>O49931</accession>
<protein>
    <recommendedName>
        <fullName>Protein TIC 55, chloroplastic</fullName>
    </recommendedName>
    <alternativeName>
        <fullName>Rieske iron-sulfur protein TIC55</fullName>
    </alternativeName>
    <alternativeName>
        <fullName>Translocon at the inner envelope membrane of chloroplasts 55</fullName>
        <shortName>PsTIC55</shortName>
    </alternativeName>
</protein>
<comment type="function">
    <text>Involved in protein precursor import into chloroplasts. Part of the redox regulon consisting of TIC32, TIC 55 and TIC62.</text>
</comment>
<comment type="cofactor">
    <cofactor evidence="2">
        <name>[2Fe-2S] cluster</name>
        <dbReference type="ChEBI" id="CHEBI:190135"/>
    </cofactor>
    <text evidence="2">Binds 1 [2Fe-2S] cluster per subunit.</text>
</comment>
<comment type="subunit">
    <text evidence="3 4">Part of the Tic complex. Interacts with TIC62 and TIC110.</text>
</comment>
<comment type="subcellular location">
    <subcellularLocation>
        <location evidence="4">Plastid</location>
        <location evidence="4">Chloroplast inner membrane</location>
        <topology evidence="4">Multi-pass membrane protein</topology>
    </subcellularLocation>
</comment>
<keyword id="KW-0001">2Fe-2S</keyword>
<keyword id="KW-0150">Chloroplast</keyword>
<keyword id="KW-0903">Direct protein sequencing</keyword>
<keyword id="KW-0408">Iron</keyword>
<keyword id="KW-0411">Iron-sulfur</keyword>
<keyword id="KW-0472">Membrane</keyword>
<keyword id="KW-0479">Metal-binding</keyword>
<keyword id="KW-0934">Plastid</keyword>
<keyword id="KW-1001">Plastid inner membrane</keyword>
<keyword id="KW-0653">Protein transport</keyword>
<keyword id="KW-0809">Transit peptide</keyword>
<keyword id="KW-0812">Transmembrane</keyword>
<keyword id="KW-1133">Transmembrane helix</keyword>
<keyword id="KW-0813">Transport</keyword>
<sequence>MALALASANSFLLPTKTHFALHVSPPPSKKTLLCTNPSSNFSFNKALSSRRRKQAWCVAAAADVKDATLLDGEEDQKVLVGPSSEQERKGEREVADYDWTEEWYPLYLTKNVPHDAPLGLKVYDKNIVLFRDGNDQFQCYEDRCPHRLAKLSEGQLIDGRLECLYHGWQFEGEGKCVKIPQLPADAKIPKSACVKTYEVRDSQGVLWVWMSRKTPPNVSKIPWFENFARPGFQDISTTHELPYDHSILLENLMDPAHVPISHDRTDWSAKREDAQALGFEVTERTDRGFAGWWGREKDGSKPNFLRFEAPCVLQNNREIVDKNGEINHFSGLFLCRPTGQGKSMLIVRFGATKRSPLIKLFPEWYFHQNASKVFEQDMGFLSSQNEILLKEKVPTKELYLNLKSSDTWVAEYRKWMDKVGHGMPYHFGHSTISLPEEPAVVEHAPAGLVAGLSASSPAKGGIGTMHAPNLANRYFRHVIHCKGCSSAIKAFQIWKNVLSGVVVALAALAILVSGRQWKVLLLASASLCSVGVYACSTAIAMNTTNFIRVHRRL</sequence>
<reference key="1">
    <citation type="journal article" date="1997" name="EMBO J.">
        <title>The chloroplastic protein import machinery contains a Rieske-type iron-sulfur cluster and a mononuclear iron-binding protein.</title>
        <authorList>
            <person name="Caliebe A."/>
            <person name="Grimm R."/>
            <person name="Kaiser G."/>
            <person name="Luebeck J."/>
            <person name="Soll J."/>
            <person name="Heins L."/>
        </authorList>
    </citation>
    <scope>NUCLEOTIDE SEQUENCE [MRNA]</scope>
    <scope>PROTEIN SEQUENCE OF 61-80</scope>
    <scope>INTERACTION WITH TIC110</scope>
    <scope>SUBCELLULAR LOCATION</scope>
    <scope>TOPOLOGY</scope>
</reference>
<reference key="2">
    <citation type="journal article" date="2002" name="EMBO J.">
        <title>Protein import into chloroplasts involves redox-regulated proteins.</title>
        <authorList>
            <person name="Kuechler M."/>
            <person name="Decker S."/>
            <person name="Hoermann F."/>
            <person name="Soll J."/>
            <person name="Heins L."/>
        </authorList>
    </citation>
    <scope>INTERACTION WITH TIC62</scope>
</reference>
<reference key="3">
    <citation type="journal article" date="2010" name="Biochim. Biophys. Acta">
        <title>Protein import into chloroplasts: the Tic complex and its regulation.</title>
        <authorList>
            <person name="Kovacs-Bogdan E."/>
            <person name="Soll J."/>
            <person name="Bolter B."/>
        </authorList>
    </citation>
    <scope>REVIEW</scope>
</reference>
<feature type="transit peptide" description="Chloroplast" evidence="1">
    <location>
        <begin position="1"/>
        <end position="60"/>
    </location>
</feature>
<feature type="chain" id="PRO_0000413680" description="Protein TIC 55, chloroplastic">
    <location>
        <begin position="61"/>
        <end position="553"/>
    </location>
</feature>
<feature type="topological domain" description="Stromal" evidence="1">
    <location>
        <begin position="61"/>
        <end position="492"/>
    </location>
</feature>
<feature type="transmembrane region" description="Helical" evidence="1">
    <location>
        <begin position="493"/>
        <end position="513"/>
    </location>
</feature>
<feature type="topological domain" description="Chloroplast intermembrane" evidence="1">
    <location>
        <begin position="514"/>
        <end position="518"/>
    </location>
</feature>
<feature type="transmembrane region" description="Helical" evidence="1">
    <location>
        <begin position="519"/>
        <end position="539"/>
    </location>
</feature>
<feature type="topological domain" description="Stromal" evidence="1">
    <location>
        <begin position="540"/>
        <end position="553"/>
    </location>
</feature>
<feature type="domain" description="Rieske" evidence="2">
    <location>
        <begin position="103"/>
        <end position="208"/>
    </location>
</feature>
<feature type="binding site" evidence="2">
    <location>
        <position position="144"/>
    </location>
    <ligand>
        <name>[2Fe-2S] cluster</name>
        <dbReference type="ChEBI" id="CHEBI:190135"/>
    </ligand>
</feature>
<feature type="binding site" evidence="2">
    <location>
        <position position="146"/>
    </location>
    <ligand>
        <name>[2Fe-2S] cluster</name>
        <dbReference type="ChEBI" id="CHEBI:190135"/>
    </ligand>
</feature>
<feature type="binding site" evidence="2">
    <location>
        <position position="163"/>
    </location>
    <ligand>
        <name>[2Fe-2S] cluster</name>
        <dbReference type="ChEBI" id="CHEBI:190135"/>
    </ligand>
</feature>
<feature type="binding site" evidence="2">
    <location>
        <position position="166"/>
    </location>
    <ligand>
        <name>[2Fe-2S] cluster</name>
        <dbReference type="ChEBI" id="CHEBI:190135"/>
    </ligand>
</feature>
<feature type="binding site" evidence="1">
    <location>
        <position position="257"/>
    </location>
    <ligand>
        <name>Fe cation</name>
        <dbReference type="ChEBI" id="CHEBI:24875"/>
    </ligand>
</feature>
<feature type="binding site" evidence="1">
    <location>
        <position position="262"/>
    </location>
    <ligand>
        <name>Fe cation</name>
        <dbReference type="ChEBI" id="CHEBI:24875"/>
    </ligand>
</feature>
<proteinExistence type="evidence at protein level"/>
<organism>
    <name type="scientific">Pisum sativum</name>
    <name type="common">Garden pea</name>
    <name type="synonym">Lathyrus oleraceus</name>
    <dbReference type="NCBI Taxonomy" id="3888"/>
    <lineage>
        <taxon>Eukaryota</taxon>
        <taxon>Viridiplantae</taxon>
        <taxon>Streptophyta</taxon>
        <taxon>Embryophyta</taxon>
        <taxon>Tracheophyta</taxon>
        <taxon>Spermatophyta</taxon>
        <taxon>Magnoliopsida</taxon>
        <taxon>eudicotyledons</taxon>
        <taxon>Gunneridae</taxon>
        <taxon>Pentapetalae</taxon>
        <taxon>rosids</taxon>
        <taxon>fabids</taxon>
        <taxon>Fabales</taxon>
        <taxon>Fabaceae</taxon>
        <taxon>Papilionoideae</taxon>
        <taxon>50 kb inversion clade</taxon>
        <taxon>NPAAA clade</taxon>
        <taxon>Hologalegina</taxon>
        <taxon>IRL clade</taxon>
        <taxon>Fabeae</taxon>
        <taxon>Pisum</taxon>
    </lineage>
</organism>
<name>TIC55_PEA</name>
<dbReference type="EMBL" id="AJ000520">
    <property type="protein sequence ID" value="CAA04157.1"/>
    <property type="molecule type" value="mRNA"/>
</dbReference>
<dbReference type="PIR" id="T06499">
    <property type="entry name" value="T06499"/>
</dbReference>
<dbReference type="SMR" id="O49931"/>
<dbReference type="IntAct" id="O49931">
    <property type="interactions" value="2"/>
</dbReference>
<dbReference type="TCDB" id="3.A.9.1.1">
    <property type="family name" value="the chloroplast envelope protein translocase (cept or tic-toc) family"/>
</dbReference>
<dbReference type="GO" id="GO:0009706">
    <property type="term" value="C:chloroplast inner membrane"/>
    <property type="evidence" value="ECO:0007669"/>
    <property type="project" value="UniProtKB-SubCell"/>
</dbReference>
<dbReference type="GO" id="GO:0051537">
    <property type="term" value="F:2 iron, 2 sulfur cluster binding"/>
    <property type="evidence" value="ECO:0007669"/>
    <property type="project" value="UniProtKB-KW"/>
</dbReference>
<dbReference type="GO" id="GO:0010277">
    <property type="term" value="F:chlorophyllide a oxygenase activity"/>
    <property type="evidence" value="ECO:0007669"/>
    <property type="project" value="InterPro"/>
</dbReference>
<dbReference type="GO" id="GO:0046872">
    <property type="term" value="F:metal ion binding"/>
    <property type="evidence" value="ECO:0007669"/>
    <property type="project" value="UniProtKB-KW"/>
</dbReference>
<dbReference type="GO" id="GO:0045036">
    <property type="term" value="P:protein targeting to chloroplast"/>
    <property type="evidence" value="ECO:0007669"/>
    <property type="project" value="TreeGrafter"/>
</dbReference>
<dbReference type="GO" id="GO:0015031">
    <property type="term" value="P:protein transport"/>
    <property type="evidence" value="ECO:0007669"/>
    <property type="project" value="UniProtKB-KW"/>
</dbReference>
<dbReference type="CDD" id="cd04338">
    <property type="entry name" value="Rieske_RO_Alpha_Tic55"/>
    <property type="match status" value="1"/>
</dbReference>
<dbReference type="Gene3D" id="3.90.380.10">
    <property type="entry name" value="Naphthalene 1,2-dioxygenase Alpha Subunit, Chain A, domain 1"/>
    <property type="match status" value="1"/>
</dbReference>
<dbReference type="Gene3D" id="2.102.10.10">
    <property type="entry name" value="Rieske [2Fe-2S] iron-sulphur domain"/>
    <property type="match status" value="1"/>
</dbReference>
<dbReference type="InterPro" id="IPR050584">
    <property type="entry name" value="Cholesterol_7-desaturase"/>
</dbReference>
<dbReference type="InterPro" id="IPR013626">
    <property type="entry name" value="PaO"/>
</dbReference>
<dbReference type="InterPro" id="IPR017941">
    <property type="entry name" value="Rieske_2Fe-2S"/>
</dbReference>
<dbReference type="InterPro" id="IPR036922">
    <property type="entry name" value="Rieske_2Fe-2S_sf"/>
</dbReference>
<dbReference type="PANTHER" id="PTHR21266">
    <property type="entry name" value="IRON-SULFUR DOMAIN CONTAINING PROTEIN"/>
    <property type="match status" value="1"/>
</dbReference>
<dbReference type="PANTHER" id="PTHR21266:SF29">
    <property type="entry name" value="PROTEIN TIC 55, CHLOROPLASTIC"/>
    <property type="match status" value="1"/>
</dbReference>
<dbReference type="Pfam" id="PF08417">
    <property type="entry name" value="PaO"/>
    <property type="match status" value="1"/>
</dbReference>
<dbReference type="Pfam" id="PF00355">
    <property type="entry name" value="Rieske"/>
    <property type="match status" value="1"/>
</dbReference>
<dbReference type="SUPFAM" id="SSF55961">
    <property type="entry name" value="Bet v1-like"/>
    <property type="match status" value="1"/>
</dbReference>
<dbReference type="SUPFAM" id="SSF50022">
    <property type="entry name" value="ISP domain"/>
    <property type="match status" value="1"/>
</dbReference>
<dbReference type="PROSITE" id="PS51296">
    <property type="entry name" value="RIESKE"/>
    <property type="match status" value="1"/>
</dbReference>